<comment type="function">
    <text evidence="1">RNA chaperone that binds small regulatory RNA (sRNAs) and mRNAs to facilitate mRNA translational regulation in response to envelope stress, environmental stress and changes in metabolite concentrations. Also binds with high specificity to tRNAs.</text>
</comment>
<comment type="subunit">
    <text evidence="1">Homohexamer.</text>
</comment>
<comment type="similarity">
    <text evidence="1">Belongs to the Hfq family.</text>
</comment>
<name>HFQ_FRATT</name>
<reference key="1">
    <citation type="journal article" date="2005" name="Nat. Genet.">
        <title>The complete genome sequence of Francisella tularensis, the causative agent of tularemia.</title>
        <authorList>
            <person name="Larsson P."/>
            <person name="Oyston P.C.F."/>
            <person name="Chain P."/>
            <person name="Chu M.C."/>
            <person name="Duffield M."/>
            <person name="Fuxelius H.-H."/>
            <person name="Garcia E."/>
            <person name="Haelltorp G."/>
            <person name="Johansson D."/>
            <person name="Isherwood K.E."/>
            <person name="Karp P.D."/>
            <person name="Larsson E."/>
            <person name="Liu Y."/>
            <person name="Michell S."/>
            <person name="Prior J."/>
            <person name="Prior R."/>
            <person name="Malfatti S."/>
            <person name="Sjoestedt A."/>
            <person name="Svensson K."/>
            <person name="Thompson N."/>
            <person name="Vergez L."/>
            <person name="Wagg J.K."/>
            <person name="Wren B.W."/>
            <person name="Lindler L.E."/>
            <person name="Andersson S.G.E."/>
            <person name="Forsman M."/>
            <person name="Titball R.W."/>
        </authorList>
    </citation>
    <scope>NUCLEOTIDE SEQUENCE [LARGE SCALE GENOMIC DNA]</scope>
    <source>
        <strain>SCHU S4 / Schu 4</strain>
    </source>
</reference>
<dbReference type="EMBL" id="AJ749949">
    <property type="protein sequence ID" value="CAG45263.1"/>
    <property type="molecule type" value="Genomic_DNA"/>
</dbReference>
<dbReference type="RefSeq" id="WP_003020370.1">
    <property type="nucleotide sequence ID" value="NC_006570.2"/>
</dbReference>
<dbReference type="RefSeq" id="YP_169651.1">
    <property type="nucleotide sequence ID" value="NC_006570.2"/>
</dbReference>
<dbReference type="SMR" id="Q5NH41"/>
<dbReference type="STRING" id="177416.FTT_0630"/>
<dbReference type="DNASU" id="3192428"/>
<dbReference type="EnsemblBacteria" id="CAG45263">
    <property type="protein sequence ID" value="CAG45263"/>
    <property type="gene ID" value="FTT_0630"/>
</dbReference>
<dbReference type="KEGG" id="ftu:FTT_0630"/>
<dbReference type="eggNOG" id="COG1923">
    <property type="taxonomic scope" value="Bacteria"/>
</dbReference>
<dbReference type="OrthoDB" id="9799751at2"/>
<dbReference type="Proteomes" id="UP000001174">
    <property type="component" value="Chromosome"/>
</dbReference>
<dbReference type="GO" id="GO:0005829">
    <property type="term" value="C:cytosol"/>
    <property type="evidence" value="ECO:0007669"/>
    <property type="project" value="TreeGrafter"/>
</dbReference>
<dbReference type="GO" id="GO:0003723">
    <property type="term" value="F:RNA binding"/>
    <property type="evidence" value="ECO:0007669"/>
    <property type="project" value="UniProtKB-UniRule"/>
</dbReference>
<dbReference type="GO" id="GO:0006355">
    <property type="term" value="P:regulation of DNA-templated transcription"/>
    <property type="evidence" value="ECO:0007669"/>
    <property type="project" value="InterPro"/>
</dbReference>
<dbReference type="GO" id="GO:0043487">
    <property type="term" value="P:regulation of RNA stability"/>
    <property type="evidence" value="ECO:0007669"/>
    <property type="project" value="TreeGrafter"/>
</dbReference>
<dbReference type="GO" id="GO:0045974">
    <property type="term" value="P:regulation of translation, ncRNA-mediated"/>
    <property type="evidence" value="ECO:0007669"/>
    <property type="project" value="TreeGrafter"/>
</dbReference>
<dbReference type="CDD" id="cd01716">
    <property type="entry name" value="Hfq"/>
    <property type="match status" value="1"/>
</dbReference>
<dbReference type="FunFam" id="2.30.30.100:FF:000001">
    <property type="entry name" value="RNA-binding protein Hfq"/>
    <property type="match status" value="1"/>
</dbReference>
<dbReference type="Gene3D" id="2.30.30.100">
    <property type="match status" value="1"/>
</dbReference>
<dbReference type="HAMAP" id="MF_00436">
    <property type="entry name" value="Hfq"/>
    <property type="match status" value="1"/>
</dbReference>
<dbReference type="InterPro" id="IPR005001">
    <property type="entry name" value="Hfq"/>
</dbReference>
<dbReference type="InterPro" id="IPR010920">
    <property type="entry name" value="LSM_dom_sf"/>
</dbReference>
<dbReference type="InterPro" id="IPR047575">
    <property type="entry name" value="Sm"/>
</dbReference>
<dbReference type="NCBIfam" id="TIGR02383">
    <property type="entry name" value="Hfq"/>
    <property type="match status" value="1"/>
</dbReference>
<dbReference type="NCBIfam" id="NF001602">
    <property type="entry name" value="PRK00395.1"/>
    <property type="match status" value="1"/>
</dbReference>
<dbReference type="PANTHER" id="PTHR34772">
    <property type="entry name" value="RNA-BINDING PROTEIN HFQ"/>
    <property type="match status" value="1"/>
</dbReference>
<dbReference type="PANTHER" id="PTHR34772:SF1">
    <property type="entry name" value="RNA-BINDING PROTEIN HFQ"/>
    <property type="match status" value="1"/>
</dbReference>
<dbReference type="Pfam" id="PF17209">
    <property type="entry name" value="Hfq"/>
    <property type="match status" value="1"/>
</dbReference>
<dbReference type="SUPFAM" id="SSF50182">
    <property type="entry name" value="Sm-like ribonucleoproteins"/>
    <property type="match status" value="1"/>
</dbReference>
<dbReference type="PROSITE" id="PS52002">
    <property type="entry name" value="SM"/>
    <property type="match status" value="1"/>
</dbReference>
<keyword id="KW-1185">Reference proteome</keyword>
<keyword id="KW-0694">RNA-binding</keyword>
<keyword id="KW-0346">Stress response</keyword>
<evidence type="ECO:0000255" key="1">
    <source>
        <dbReference type="HAMAP-Rule" id="MF_00436"/>
    </source>
</evidence>
<evidence type="ECO:0000255" key="2">
    <source>
        <dbReference type="PROSITE-ProRule" id="PRU01346"/>
    </source>
</evidence>
<evidence type="ECO:0000256" key="3">
    <source>
        <dbReference type="SAM" id="MobiDB-lite"/>
    </source>
</evidence>
<feature type="chain" id="PRO_0000095639" description="RNA-binding protein Hfq">
    <location>
        <begin position="1"/>
        <end position="109"/>
    </location>
</feature>
<feature type="domain" description="Sm" evidence="2">
    <location>
        <begin position="9"/>
        <end position="68"/>
    </location>
</feature>
<feature type="region of interest" description="Disordered" evidence="3">
    <location>
        <begin position="77"/>
        <end position="109"/>
    </location>
</feature>
<protein>
    <recommendedName>
        <fullName evidence="1">RNA-binding protein Hfq</fullName>
    </recommendedName>
</protein>
<proteinExistence type="inferred from homology"/>
<sequence length="109" mass="12525">MSRISSLQDPFLNALRKEKVSVSVYLVNGIKLQGQVEAFDQFCIVLRNTVNQMVYKHAISTIVPAKSVRMIYNSFNPYHQNSNDEQDENVDDIHSDDLEIQENEGNIHE</sequence>
<accession>Q5NH41</accession>
<gene>
    <name evidence="1" type="primary">hfq</name>
    <name type="ordered locus">FTT_0630</name>
</gene>
<organism>
    <name type="scientific">Francisella tularensis subsp. tularensis (strain SCHU S4 / Schu 4)</name>
    <dbReference type="NCBI Taxonomy" id="177416"/>
    <lineage>
        <taxon>Bacteria</taxon>
        <taxon>Pseudomonadati</taxon>
        <taxon>Pseudomonadota</taxon>
        <taxon>Gammaproteobacteria</taxon>
        <taxon>Thiotrichales</taxon>
        <taxon>Francisellaceae</taxon>
        <taxon>Francisella</taxon>
    </lineage>
</organism>